<evidence type="ECO:0000250" key="1">
    <source>
        <dbReference type="UniProtKB" id="B2KPR3"/>
    </source>
</evidence>
<evidence type="ECO:0000250" key="2">
    <source>
        <dbReference type="UniProtKB" id="Q9FLN8"/>
    </source>
</evidence>
<evidence type="ECO:0000303" key="3">
    <source ref="4"/>
</evidence>
<evidence type="ECO:0000305" key="4"/>
<proteinExistence type="evidence at transcript level"/>
<gene>
    <name type="ordered locus">At5g38100</name>
    <name type="ORF">F16F17.100</name>
</gene>
<keyword id="KW-0025">Alternative splicing</keyword>
<keyword id="KW-0460">Magnesium</keyword>
<keyword id="KW-0479">Metal-binding</keyword>
<keyword id="KW-0489">Methyltransferase</keyword>
<keyword id="KW-1185">Reference proteome</keyword>
<keyword id="KW-0949">S-adenosyl-L-methionine</keyword>
<keyword id="KW-0808">Transferase</keyword>
<feature type="chain" id="PRO_0000333028" description="Probable S-adenosylmethionine-dependent methyltransferase At5g38100">
    <location>
        <begin position="1"/>
        <end position="359"/>
    </location>
</feature>
<feature type="binding site" evidence="1">
    <location>
        <position position="19"/>
    </location>
    <ligand>
        <name>S-adenosyl-L-homocysteine</name>
        <dbReference type="ChEBI" id="CHEBI:57856"/>
    </ligand>
</feature>
<feature type="binding site" evidence="1">
    <location>
        <position position="63"/>
    </location>
    <ligand>
        <name>S-adenosyl-L-homocysteine</name>
        <dbReference type="ChEBI" id="CHEBI:57856"/>
    </ligand>
</feature>
<feature type="binding site" evidence="1">
    <location>
        <position position="68"/>
    </location>
    <ligand>
        <name>S-adenosyl-L-homocysteine</name>
        <dbReference type="ChEBI" id="CHEBI:57856"/>
    </ligand>
</feature>
<feature type="binding site" evidence="1">
    <location>
        <position position="104"/>
    </location>
    <ligand>
        <name>S-adenosyl-L-homocysteine</name>
        <dbReference type="ChEBI" id="CHEBI:57856"/>
    </ligand>
</feature>
<feature type="binding site" evidence="1">
    <location>
        <position position="133"/>
    </location>
    <ligand>
        <name>S-adenosyl-L-homocysteine</name>
        <dbReference type="ChEBI" id="CHEBI:57856"/>
    </ligand>
</feature>
<feature type="binding site" evidence="1">
    <location>
        <position position="134"/>
    </location>
    <ligand>
        <name>S-adenosyl-L-homocysteine</name>
        <dbReference type="ChEBI" id="CHEBI:57856"/>
    </ligand>
</feature>
<feature type="binding site" evidence="2">
    <location>
        <position position="172"/>
    </location>
    <ligand>
        <name>Mg(2+)</name>
        <dbReference type="ChEBI" id="CHEBI:18420"/>
    </ligand>
</feature>
<feature type="binding site" evidence="2">
    <location>
        <position position="258"/>
    </location>
    <ligand>
        <name>Mg(2+)</name>
        <dbReference type="ChEBI" id="CHEBI:18420"/>
    </ligand>
</feature>
<feature type="binding site" evidence="2">
    <location>
        <position position="260"/>
    </location>
    <ligand>
        <name>Mg(2+)</name>
        <dbReference type="ChEBI" id="CHEBI:18420"/>
    </ligand>
</feature>
<feature type="splice variant" id="VSP_033443" description="In isoform 2." evidence="3">
    <location>
        <begin position="250"/>
        <end position="359"/>
    </location>
</feature>
<protein>
    <recommendedName>
        <fullName>Probable S-adenosylmethionine-dependent methyltransferase At5g38100</fullName>
        <ecNumber>2.1.1.-</ecNumber>
    </recommendedName>
</protein>
<sequence length="359" mass="40945">MSTSSHMYPMSSGHDQHSYIHNSSYQKAAISSAVEKTRRCIFEKLDLQLSSDFGTFRIADFGCSIGPNTFHVAQSIIDTVKSKRLEESTENSLVPLEFQVFFNDQPTNDFNTLFRTQPLSPEREYFSVGVPGSFYGRVLPRNSIHIGHTSYTTHWLSKVPDNVCDKKSMAWNKNYIQCNNLLEEVTKAYKVQFIKDMEIFLDARAEELVPGGLMIVIGECLPDGVSLYETWQGYVMDTIGDCLMDMAKSGITSEEKIDLFSLPVYFPQFSELKGEIEKNGSFTIELMETTSHPLEGKPLTNDFITSTFRAFLTTIIEKHFGDGVVDELFYRLAKKLSNHPIDFEMRKKQVVYCIVLKRK</sequence>
<organism>
    <name type="scientific">Arabidopsis thaliana</name>
    <name type="common">Mouse-ear cress</name>
    <dbReference type="NCBI Taxonomy" id="3702"/>
    <lineage>
        <taxon>Eukaryota</taxon>
        <taxon>Viridiplantae</taxon>
        <taxon>Streptophyta</taxon>
        <taxon>Embryophyta</taxon>
        <taxon>Tracheophyta</taxon>
        <taxon>Spermatophyta</taxon>
        <taxon>Magnoliopsida</taxon>
        <taxon>eudicotyledons</taxon>
        <taxon>Gunneridae</taxon>
        <taxon>Pentapetalae</taxon>
        <taxon>rosids</taxon>
        <taxon>malvids</taxon>
        <taxon>Brassicales</taxon>
        <taxon>Brassicaceae</taxon>
        <taxon>Camelineae</taxon>
        <taxon>Arabidopsis</taxon>
    </lineage>
</organism>
<comment type="cofactor">
    <cofactor evidence="2">
        <name>Mg(2+)</name>
        <dbReference type="ChEBI" id="CHEBI:18420"/>
    </cofactor>
    <text evidence="2">Binds 1 Mg(2+) ion per subunit.</text>
</comment>
<comment type="subunit">
    <text evidence="2">Homodimer.</text>
</comment>
<comment type="alternative products">
    <event type="alternative splicing"/>
    <isoform>
        <id>Q9LS10-1</id>
        <name>1</name>
        <sequence type="displayed"/>
    </isoform>
    <isoform>
        <id>Q9LS10-2</id>
        <name>2</name>
        <sequence type="described" ref="VSP_033443"/>
    </isoform>
</comment>
<comment type="miscellaneous">
    <molecule>Isoform 2</molecule>
    <text evidence="4">May be due to competing acceptor splice site.</text>
</comment>
<comment type="similarity">
    <text evidence="4">Belongs to the methyltransferase superfamily. Type-7 methyltransferase family.</text>
</comment>
<name>MT810_ARATH</name>
<accession>Q9LS10</accession>
<accession>Q0WQ18</accession>
<dbReference type="EC" id="2.1.1.-"/>
<dbReference type="EMBL" id="AB028606">
    <property type="protein sequence ID" value="BAA97544.1"/>
    <property type="molecule type" value="Genomic_DNA"/>
</dbReference>
<dbReference type="EMBL" id="CP002688">
    <property type="protein sequence ID" value="AED94267.1"/>
    <property type="molecule type" value="Genomic_DNA"/>
</dbReference>
<dbReference type="EMBL" id="CP002688">
    <property type="protein sequence ID" value="AED94268.1"/>
    <property type="molecule type" value="Genomic_DNA"/>
</dbReference>
<dbReference type="EMBL" id="BX831638">
    <property type="status" value="NOT_ANNOTATED_CDS"/>
    <property type="molecule type" value="mRNA"/>
</dbReference>
<dbReference type="EMBL" id="AK228891">
    <property type="protein sequence ID" value="BAF00781.1"/>
    <property type="molecule type" value="mRNA"/>
</dbReference>
<dbReference type="RefSeq" id="NP_001190433.1">
    <molecule id="Q9LS10-2"/>
    <property type="nucleotide sequence ID" value="NM_001203504.1"/>
</dbReference>
<dbReference type="RefSeq" id="NP_198626.2">
    <molecule id="Q9LS10-1"/>
    <property type="nucleotide sequence ID" value="NM_123170.3"/>
</dbReference>
<dbReference type="SMR" id="Q9LS10"/>
<dbReference type="BioGRID" id="19041">
    <property type="interactions" value="1"/>
</dbReference>
<dbReference type="PaxDb" id="3702-AT5G38100.1"/>
<dbReference type="ProteomicsDB" id="250804">
    <molecule id="Q9LS10-1"/>
</dbReference>
<dbReference type="EnsemblPlants" id="AT5G38100.1">
    <molecule id="Q9LS10-1"/>
    <property type="protein sequence ID" value="AT5G38100.1"/>
    <property type="gene ID" value="AT5G38100"/>
</dbReference>
<dbReference type="EnsemblPlants" id="AT5G38100.2">
    <molecule id="Q9LS10-2"/>
    <property type="protein sequence ID" value="AT5G38100.2"/>
    <property type="gene ID" value="AT5G38100"/>
</dbReference>
<dbReference type="GeneID" id="833790"/>
<dbReference type="Gramene" id="AT5G38100.1">
    <molecule id="Q9LS10-1"/>
    <property type="protein sequence ID" value="AT5G38100.1"/>
    <property type="gene ID" value="AT5G38100"/>
</dbReference>
<dbReference type="Gramene" id="AT5G38100.2">
    <molecule id="Q9LS10-2"/>
    <property type="protein sequence ID" value="AT5G38100.2"/>
    <property type="gene ID" value="AT5G38100"/>
</dbReference>
<dbReference type="KEGG" id="ath:AT5G38100"/>
<dbReference type="Araport" id="AT5G38100"/>
<dbReference type="TAIR" id="AT5G38100"/>
<dbReference type="eggNOG" id="ENOG502QUIN">
    <property type="taxonomic scope" value="Eukaryota"/>
</dbReference>
<dbReference type="HOGENOM" id="CLU_019628_1_1_1"/>
<dbReference type="InParanoid" id="Q9LS10"/>
<dbReference type="OMA" id="QCNNSIE"/>
<dbReference type="PhylomeDB" id="Q9LS10"/>
<dbReference type="BioCyc" id="ARA:AT5G38100-MONOMER"/>
<dbReference type="PRO" id="PR:Q9LS10"/>
<dbReference type="Proteomes" id="UP000006548">
    <property type="component" value="Chromosome 5"/>
</dbReference>
<dbReference type="ExpressionAtlas" id="Q9LS10">
    <property type="expression patterns" value="baseline and differential"/>
</dbReference>
<dbReference type="GO" id="GO:0046872">
    <property type="term" value="F:metal ion binding"/>
    <property type="evidence" value="ECO:0007669"/>
    <property type="project" value="UniProtKB-KW"/>
</dbReference>
<dbReference type="GO" id="GO:0008168">
    <property type="term" value="F:methyltransferase activity"/>
    <property type="evidence" value="ECO:0007669"/>
    <property type="project" value="UniProtKB-KW"/>
</dbReference>
<dbReference type="GO" id="GO:0032259">
    <property type="term" value="P:methylation"/>
    <property type="evidence" value="ECO:0007669"/>
    <property type="project" value="UniProtKB-KW"/>
</dbReference>
<dbReference type="Gene3D" id="1.10.1200.270">
    <property type="entry name" value="Methyltransferase, alpha-helical capping domain"/>
    <property type="match status" value="1"/>
</dbReference>
<dbReference type="Gene3D" id="3.40.50.150">
    <property type="entry name" value="Vaccinia Virus protein VP39"/>
    <property type="match status" value="1"/>
</dbReference>
<dbReference type="InterPro" id="IPR005299">
    <property type="entry name" value="MeTrfase_7"/>
</dbReference>
<dbReference type="InterPro" id="IPR042086">
    <property type="entry name" value="MeTrfase_capping"/>
</dbReference>
<dbReference type="InterPro" id="IPR029063">
    <property type="entry name" value="SAM-dependent_MTases_sf"/>
</dbReference>
<dbReference type="PANTHER" id="PTHR31009">
    <property type="entry name" value="S-ADENOSYL-L-METHIONINE:CARBOXYL METHYLTRANSFERASE FAMILY PROTEIN"/>
    <property type="match status" value="1"/>
</dbReference>
<dbReference type="Pfam" id="PF03492">
    <property type="entry name" value="Methyltransf_7"/>
    <property type="match status" value="1"/>
</dbReference>
<dbReference type="SUPFAM" id="SSF53335">
    <property type="entry name" value="S-adenosyl-L-methionine-dependent methyltransferases"/>
    <property type="match status" value="1"/>
</dbReference>
<reference key="1">
    <citation type="submission" date="1999-06" db="EMBL/GenBank/DDBJ databases">
        <title>Structural analysis of Arabidopsis thaliana chromosome 5. XI.</title>
        <authorList>
            <person name="Kaneko T."/>
            <person name="Katoh T."/>
            <person name="Asamizu E."/>
            <person name="Sato S."/>
            <person name="Nakamura Y."/>
            <person name="Kotani H."/>
            <person name="Tabata S."/>
        </authorList>
    </citation>
    <scope>NUCLEOTIDE SEQUENCE [LARGE SCALE GENOMIC DNA]</scope>
    <source>
        <strain>cv. Columbia</strain>
    </source>
</reference>
<reference key="2">
    <citation type="journal article" date="2017" name="Plant J.">
        <title>Araport11: a complete reannotation of the Arabidopsis thaliana reference genome.</title>
        <authorList>
            <person name="Cheng C.Y."/>
            <person name="Krishnakumar V."/>
            <person name="Chan A.P."/>
            <person name="Thibaud-Nissen F."/>
            <person name="Schobel S."/>
            <person name="Town C.D."/>
        </authorList>
    </citation>
    <scope>GENOME REANNOTATION</scope>
    <source>
        <strain>cv. Columbia</strain>
    </source>
</reference>
<reference key="3">
    <citation type="journal article" date="2004" name="Genome Res.">
        <title>Whole genome sequence comparisons and 'full-length' cDNA sequences: a combined approach to evaluate and improve Arabidopsis genome annotation.</title>
        <authorList>
            <person name="Castelli V."/>
            <person name="Aury J.-M."/>
            <person name="Jaillon O."/>
            <person name="Wincker P."/>
            <person name="Clepet C."/>
            <person name="Menard M."/>
            <person name="Cruaud C."/>
            <person name="Quetier F."/>
            <person name="Scarpelli C."/>
            <person name="Schaechter V."/>
            <person name="Temple G."/>
            <person name="Caboche M."/>
            <person name="Weissenbach J."/>
            <person name="Salanoubat M."/>
        </authorList>
    </citation>
    <scope>NUCLEOTIDE SEQUENCE [LARGE SCALE MRNA] (ISOFORM 1)</scope>
    <source>
        <strain>cv. Columbia</strain>
    </source>
</reference>
<reference key="4">
    <citation type="submission" date="2006-07" db="EMBL/GenBank/DDBJ databases">
        <title>Large-scale analysis of RIKEN Arabidopsis full-length (RAFL) cDNAs.</title>
        <authorList>
            <person name="Totoki Y."/>
            <person name="Seki M."/>
            <person name="Ishida J."/>
            <person name="Nakajima M."/>
            <person name="Enju A."/>
            <person name="Kamiya A."/>
            <person name="Narusaka M."/>
            <person name="Shin-i T."/>
            <person name="Nakagawa M."/>
            <person name="Sakamoto N."/>
            <person name="Oishi K."/>
            <person name="Kohara Y."/>
            <person name="Kobayashi M."/>
            <person name="Toyoda A."/>
            <person name="Sakaki Y."/>
            <person name="Sakurai T."/>
            <person name="Iida K."/>
            <person name="Akiyama K."/>
            <person name="Satou M."/>
            <person name="Toyoda T."/>
            <person name="Konagaya A."/>
            <person name="Carninci P."/>
            <person name="Kawai J."/>
            <person name="Hayashizaki Y."/>
            <person name="Shinozaki K."/>
        </authorList>
    </citation>
    <scope>NUCLEOTIDE SEQUENCE [LARGE SCALE MRNA] (ISOFORM 2)</scope>
    <source>
        <strain>cv. Columbia</strain>
    </source>
</reference>